<gene>
    <name type="primary">N</name>
</gene>
<organismHost>
    <name type="scientific">Aedes</name>
    <dbReference type="NCBI Taxonomy" id="7158"/>
</organismHost>
<organismHost>
    <name type="scientific">Bos taurus</name>
    <name type="common">Bovine</name>
    <dbReference type="NCBI Taxonomy" id="9913"/>
</organismHost>
<organismHost>
    <name type="scientific">Canis lupus familiaris</name>
    <name type="common">Dog</name>
    <name type="synonym">Canis familiaris</name>
    <dbReference type="NCBI Taxonomy" id="9615"/>
</organismHost>
<organismHost>
    <name type="scientific">Culex</name>
    <dbReference type="NCBI Taxonomy" id="7174"/>
</organismHost>
<organismHost>
    <name type="scientific">Culiseta</name>
    <dbReference type="NCBI Taxonomy" id="174825"/>
</organismHost>
<organismHost>
    <name type="scientific">Equus caballus</name>
    <name type="common">Horse</name>
    <dbReference type="NCBI Taxonomy" id="9796"/>
</organismHost>
<organismHost>
    <name type="scientific">Gallus gallus</name>
    <name type="common">Chicken</name>
    <dbReference type="NCBI Taxonomy" id="9031"/>
</organismHost>
<organismHost>
    <name type="scientific">Homo sapiens</name>
    <name type="common">Human</name>
    <dbReference type="NCBI Taxonomy" id="9606"/>
</organismHost>
<organismHost>
    <name type="scientific">Lepus americanus</name>
    <name type="common">Snowshoe hare</name>
    <dbReference type="NCBI Taxonomy" id="48086"/>
</organismHost>
<comment type="function">
    <text evidence="1">Inhibits host transcriptional machinery, by producing modifications to the phosphorylation state of the C-terminal domain (CTD) of RNA polymerase II. Inhibits phosphorylation at serine 2 in the heptapeptide repeat (YSPTSPS) of the CTD of RNA polymerase II, suggesting that the elongation step of transcription and/or 3'-end processing is prevented. Inhibition of host transcription machinery leads to shut off of host cell protein synthesis and inhibition of the host innate immune response. NSs also seems to be involved in the nuclear relocalization of host PABP1 (By similarity).</text>
</comment>
<comment type="alternative products">
    <event type="alternative initiation"/>
    <isoform>
        <id>P03514-1</id>
        <name>NSS</name>
        <sequence type="displayed"/>
    </isoform>
    <isoform>
        <id>P03513-1</id>
        <name>N</name>
        <sequence type="external"/>
    </isoform>
</comment>
<comment type="miscellaneous">
    <molecule>Isoform NSS</molecule>
    <text>Produced by alternative initiation in the N gene, but encoded on another frame.</text>
</comment>
<comment type="similarity">
    <text evidence="2">Belongs to the orthobunyavirus NS-S protein family.</text>
</comment>
<feature type="chain" id="PRO_0000221975" description="Non-structural protein NS-S">
    <location>
        <begin position="1"/>
        <end position="92"/>
    </location>
</feature>
<name>NSS_BUNSH</name>
<evidence type="ECO:0000250" key="1"/>
<evidence type="ECO:0000305" key="2"/>
<dbReference type="EMBL" id="J02390">
    <property type="status" value="NOT_ANNOTATED_CDS"/>
    <property type="molecule type" value="Genomic_RNA"/>
</dbReference>
<dbReference type="EMBL" id="J02393">
    <property type="status" value="NOT_ANNOTATED_CDS"/>
    <property type="molecule type" value="Genomic_RNA"/>
</dbReference>
<dbReference type="PIR" id="A04105">
    <property type="entry name" value="MNVUSH"/>
</dbReference>
<dbReference type="GO" id="GO:0039657">
    <property type="term" value="P:symbiont-mediated suppression of host gene expression"/>
    <property type="evidence" value="ECO:0007669"/>
    <property type="project" value="UniProtKB-KW"/>
</dbReference>
<dbReference type="GO" id="GO:0016032">
    <property type="term" value="P:viral process"/>
    <property type="evidence" value="ECO:0007669"/>
    <property type="project" value="InterPro"/>
</dbReference>
<dbReference type="InterPro" id="IPR000797">
    <property type="entry name" value="Bunya_NSs"/>
</dbReference>
<dbReference type="Pfam" id="PF01104">
    <property type="entry name" value="Bunya_NS-S"/>
    <property type="match status" value="1"/>
</dbReference>
<dbReference type="PIRSF" id="PIRSF003954">
    <property type="entry name" value="NS-S_OrthobunV"/>
    <property type="match status" value="1"/>
</dbReference>
<protein>
    <recommendedName>
        <fullName>Non-structural protein NS-S</fullName>
    </recommendedName>
</protein>
<sequence>MMSHQQVQMDLILMQGIWHSVLNMQNQSILLQLGSSSSMPQRPRLLSRVSQRGRQILNLESGRWRLSIIIFLETGTIQLTATILPSTDCQDI</sequence>
<keyword id="KW-0024">Alternative initiation</keyword>
<keyword id="KW-1262">Eukaryotic host gene expression shutoff by virus</keyword>
<keyword id="KW-1191">Eukaryotic host transcription shutoff by virus</keyword>
<keyword id="KW-1190">Host gene expression shutoff by virus</keyword>
<keyword id="KW-0945">Host-virus interaction</keyword>
<keyword id="KW-1111">Inhibition of eukaryotic host transcription initiation by virus</keyword>
<organism>
    <name type="scientific">Bunyavirus snowshoe hare</name>
    <dbReference type="NCBI Taxonomy" id="11580"/>
    <lineage>
        <taxon>Viruses</taxon>
        <taxon>Riboviria</taxon>
        <taxon>Orthornavirae</taxon>
        <taxon>Negarnaviricota</taxon>
        <taxon>Polyploviricotina</taxon>
        <taxon>Ellioviricetes</taxon>
        <taxon>Bunyavirales</taxon>
        <taxon>Peribunyaviridae</taxon>
        <taxon>Orthobunyavirus</taxon>
        <taxon>Orthobunyavirus khatangaense</taxon>
    </lineage>
</organism>
<proteinExistence type="inferred from homology"/>
<reference key="1">
    <citation type="journal article" date="1982" name="Nucleic Acids Res.">
        <title>The complete sequence and coding content of snowshoe hare bunyavirus small (S) viral RNA species.</title>
        <authorList>
            <person name="Bishop D.H.L."/>
            <person name="Gould K.G."/>
            <person name="Akashi H."/>
            <person name="Clerx-Van Haaster C.M."/>
        </authorList>
    </citation>
    <scope>NUCLEOTIDE SEQUENCE [GENOMIC RNA]</scope>
</reference>
<reference key="2">
    <citation type="journal article" date="1982" name="J. Virol.">
        <title>Nucleotide sequence analyses and predicted coding of bunyavirus genome RNA species.</title>
        <authorList>
            <person name="Clerx-Van Haaster C.M."/>
            <person name="Akashi H."/>
            <person name="Auperin D.D."/>
            <person name="Bishop D.H.L."/>
        </authorList>
    </citation>
    <scope>NUCLEOTIDE SEQUENCE [GENOMIC RNA] OF 1-47</scope>
</reference>
<accession>P03514</accession>